<accession>Q839D8</accession>
<protein>
    <recommendedName>
        <fullName evidence="1">Large ribosomal subunit protein bL17</fullName>
    </recommendedName>
    <alternativeName>
        <fullName evidence="2">50S ribosomal protein L17</fullName>
    </alternativeName>
</protein>
<proteinExistence type="evidence at protein level"/>
<reference key="1">
    <citation type="journal article" date="2003" name="Science">
        <title>Role of mobile DNA in the evolution of vancomycin-resistant Enterococcus faecalis.</title>
        <authorList>
            <person name="Paulsen I.T."/>
            <person name="Banerjei L."/>
            <person name="Myers G.S.A."/>
            <person name="Nelson K.E."/>
            <person name="Seshadri R."/>
            <person name="Read T.D."/>
            <person name="Fouts D.E."/>
            <person name="Eisen J.A."/>
            <person name="Gill S.R."/>
            <person name="Heidelberg J.F."/>
            <person name="Tettelin H."/>
            <person name="Dodson R.J."/>
            <person name="Umayam L.A."/>
            <person name="Brinkac L.M."/>
            <person name="Beanan M.J."/>
            <person name="Daugherty S.C."/>
            <person name="DeBoy R.T."/>
            <person name="Durkin S.A."/>
            <person name="Kolonay J.F."/>
            <person name="Madupu R."/>
            <person name="Nelson W.C."/>
            <person name="Vamathevan J.J."/>
            <person name="Tran B."/>
            <person name="Upton J."/>
            <person name="Hansen T."/>
            <person name="Shetty J."/>
            <person name="Khouri H.M."/>
            <person name="Utterback T.R."/>
            <person name="Radune D."/>
            <person name="Ketchum K.A."/>
            <person name="Dougherty B.A."/>
            <person name="Fraser C.M."/>
        </authorList>
    </citation>
    <scope>NUCLEOTIDE SEQUENCE [LARGE SCALE GENOMIC DNA]</scope>
    <source>
        <strain>ATCC 700802 / V583</strain>
    </source>
</reference>
<feature type="chain" id="PRO_1000055822" description="Large ribosomal subunit protein bL17">
    <location>
        <begin position="1"/>
        <end position="127"/>
    </location>
</feature>
<feature type="helix" evidence="3">
    <location>
        <begin position="10"/>
        <end position="25"/>
    </location>
</feature>
<feature type="strand" evidence="3">
    <location>
        <begin position="28"/>
        <end position="33"/>
    </location>
</feature>
<feature type="helix" evidence="3">
    <location>
        <begin position="34"/>
        <end position="51"/>
    </location>
</feature>
<feature type="helix" evidence="3">
    <location>
        <begin position="56"/>
        <end position="62"/>
    </location>
</feature>
<feature type="turn" evidence="3">
    <location>
        <begin position="63"/>
        <end position="65"/>
    </location>
</feature>
<feature type="strand" evidence="3">
    <location>
        <begin position="77"/>
        <end position="79"/>
    </location>
</feature>
<feature type="helix" evidence="3">
    <location>
        <begin position="87"/>
        <end position="91"/>
    </location>
</feature>
<feature type="helix" evidence="3">
    <location>
        <begin position="93"/>
        <end position="96"/>
    </location>
</feature>
<feature type="turn" evidence="3">
    <location>
        <begin position="97"/>
        <end position="99"/>
    </location>
</feature>
<feature type="strand" evidence="3">
    <location>
        <begin position="106"/>
        <end position="112"/>
    </location>
</feature>
<feature type="turn" evidence="3">
    <location>
        <begin position="114"/>
        <end position="116"/>
    </location>
</feature>
<feature type="strand" evidence="3">
    <location>
        <begin position="119"/>
        <end position="124"/>
    </location>
</feature>
<gene>
    <name evidence="1" type="primary">rplQ</name>
    <name type="ordered locus">EF_0234</name>
</gene>
<keyword id="KW-0002">3D-structure</keyword>
<keyword id="KW-1185">Reference proteome</keyword>
<keyword id="KW-0687">Ribonucleoprotein</keyword>
<keyword id="KW-0689">Ribosomal protein</keyword>
<dbReference type="EMBL" id="AE016830">
    <property type="protein sequence ID" value="AAO80102.1"/>
    <property type="molecule type" value="Genomic_DNA"/>
</dbReference>
<dbReference type="RefSeq" id="NP_814031.1">
    <property type="nucleotide sequence ID" value="NC_004668.1"/>
</dbReference>
<dbReference type="RefSeq" id="WP_002356228.1">
    <property type="nucleotide sequence ID" value="NZ_KE136524.1"/>
</dbReference>
<dbReference type="PDB" id="6WU9">
    <property type="method" value="EM"/>
    <property type="resolution" value="2.90 A"/>
    <property type="chains" value="O=3-126"/>
</dbReference>
<dbReference type="PDB" id="7P7Q">
    <property type="method" value="EM"/>
    <property type="resolution" value="2.40 A"/>
    <property type="chains" value="Q=1-127"/>
</dbReference>
<dbReference type="PDB" id="7P7R">
    <property type="method" value="EM"/>
    <property type="resolution" value="2.90 A"/>
    <property type="chains" value="Q=1-127"/>
</dbReference>
<dbReference type="PDBsum" id="6WU9"/>
<dbReference type="PDBsum" id="7P7Q"/>
<dbReference type="PDBsum" id="7P7R"/>
<dbReference type="EMDB" id="EMD-13241"/>
<dbReference type="EMDB" id="EMD-13242"/>
<dbReference type="SMR" id="Q839D8"/>
<dbReference type="STRING" id="226185.EF_0234"/>
<dbReference type="EnsemblBacteria" id="AAO80102">
    <property type="protein sequence ID" value="AAO80102"/>
    <property type="gene ID" value="EF_0234"/>
</dbReference>
<dbReference type="GeneID" id="60892728"/>
<dbReference type="KEGG" id="efa:EF0234"/>
<dbReference type="PATRIC" id="fig|226185.45.peg.33"/>
<dbReference type="eggNOG" id="COG0203">
    <property type="taxonomic scope" value="Bacteria"/>
</dbReference>
<dbReference type="HOGENOM" id="CLU_074407_2_2_9"/>
<dbReference type="Proteomes" id="UP000001415">
    <property type="component" value="Chromosome"/>
</dbReference>
<dbReference type="GO" id="GO:0022625">
    <property type="term" value="C:cytosolic large ribosomal subunit"/>
    <property type="evidence" value="ECO:0007669"/>
    <property type="project" value="TreeGrafter"/>
</dbReference>
<dbReference type="GO" id="GO:0003735">
    <property type="term" value="F:structural constituent of ribosome"/>
    <property type="evidence" value="ECO:0007669"/>
    <property type="project" value="InterPro"/>
</dbReference>
<dbReference type="GO" id="GO:0006412">
    <property type="term" value="P:translation"/>
    <property type="evidence" value="ECO:0007669"/>
    <property type="project" value="UniProtKB-UniRule"/>
</dbReference>
<dbReference type="FunFam" id="3.90.1030.10:FF:000002">
    <property type="entry name" value="50S ribosomal protein L17"/>
    <property type="match status" value="1"/>
</dbReference>
<dbReference type="Gene3D" id="3.90.1030.10">
    <property type="entry name" value="Ribosomal protein L17"/>
    <property type="match status" value="1"/>
</dbReference>
<dbReference type="HAMAP" id="MF_01368">
    <property type="entry name" value="Ribosomal_bL17"/>
    <property type="match status" value="1"/>
</dbReference>
<dbReference type="InterPro" id="IPR000456">
    <property type="entry name" value="Ribosomal_bL17"/>
</dbReference>
<dbReference type="InterPro" id="IPR047859">
    <property type="entry name" value="Ribosomal_bL17_CS"/>
</dbReference>
<dbReference type="InterPro" id="IPR036373">
    <property type="entry name" value="Ribosomal_bL17_sf"/>
</dbReference>
<dbReference type="NCBIfam" id="TIGR00059">
    <property type="entry name" value="L17"/>
    <property type="match status" value="1"/>
</dbReference>
<dbReference type="PANTHER" id="PTHR14413:SF16">
    <property type="entry name" value="LARGE RIBOSOMAL SUBUNIT PROTEIN BL17M"/>
    <property type="match status" value="1"/>
</dbReference>
<dbReference type="PANTHER" id="PTHR14413">
    <property type="entry name" value="RIBOSOMAL PROTEIN L17"/>
    <property type="match status" value="1"/>
</dbReference>
<dbReference type="Pfam" id="PF01196">
    <property type="entry name" value="Ribosomal_L17"/>
    <property type="match status" value="1"/>
</dbReference>
<dbReference type="SUPFAM" id="SSF64263">
    <property type="entry name" value="Prokaryotic ribosomal protein L17"/>
    <property type="match status" value="1"/>
</dbReference>
<dbReference type="PROSITE" id="PS01167">
    <property type="entry name" value="RIBOSOMAL_L17"/>
    <property type="match status" value="1"/>
</dbReference>
<organism>
    <name type="scientific">Enterococcus faecalis (strain ATCC 700802 / V583)</name>
    <dbReference type="NCBI Taxonomy" id="226185"/>
    <lineage>
        <taxon>Bacteria</taxon>
        <taxon>Bacillati</taxon>
        <taxon>Bacillota</taxon>
        <taxon>Bacilli</taxon>
        <taxon>Lactobacillales</taxon>
        <taxon>Enterococcaceae</taxon>
        <taxon>Enterococcus</taxon>
    </lineage>
</organism>
<name>RL17_ENTFA</name>
<evidence type="ECO:0000255" key="1">
    <source>
        <dbReference type="HAMAP-Rule" id="MF_01368"/>
    </source>
</evidence>
<evidence type="ECO:0000305" key="2"/>
<evidence type="ECO:0007829" key="3">
    <source>
        <dbReference type="PDB" id="6WU9"/>
    </source>
</evidence>
<sequence length="127" mass="14478">MSYRKLGRTSSQRKAMLRDITTDLIINERIVTTEARAKEVRSTVEKMITLGKRGDLHARRQAATFVRNEVASVREEDESIVVESALQKLFNDLGPRFAERQGGYTRILKTEPRRGDAAPMVVIEFVK</sequence>
<comment type="subunit">
    <text evidence="1">Part of the 50S ribosomal subunit. Contacts protein L32.</text>
</comment>
<comment type="similarity">
    <text evidence="1">Belongs to the bacterial ribosomal protein bL17 family.</text>
</comment>